<sequence>MQAYFDQLDRVRYEGSKSSNPLAFRHYNPDELVLGKRMEEHLRFAACYWHTFCWNGADMFGVGAFNRPWQQPGEALALAKRKADVAFEFFHKLHVPFYCFHDVDVSPEGASLKEYINNFAQMVDVLAGKQEESGVKLLWGTANCFTNPRYGAGAATNPDPEVFSWAATQVVTAMEATHKLGGENYVLWGGREGYETLLNTDLRQEREQLGRFMQMVVEHKHKIGFQGTLLIEPKPQEPTKHQYDYDAATVYGFLKQFGLEKEIKLNIEANHATLAGHSFHHEIATAIALGLFGSVDANRGDAQLGWDTDQFPNSVEENALVMYEILKAGGFTTGGLNFDAKVRRQSTDKYDLFYGHIGAMDTMALALKIAARMIEDGELDKRIAQRYSGWNSELGQQILKGQMSLADLAKYAQEHNLSPVHQSGRQEQLENLVNHYLFDK</sequence>
<accession>B7M3I8</accession>
<gene>
    <name evidence="1" type="primary">xylA</name>
    <name type="ordered locus">ECIAI1_3730</name>
</gene>
<name>XYLA_ECO8A</name>
<feature type="chain" id="PRO_1000200296" description="Xylose isomerase">
    <location>
        <begin position="1"/>
        <end position="440"/>
    </location>
</feature>
<feature type="active site" evidence="1">
    <location>
        <position position="101"/>
    </location>
</feature>
<feature type="active site" evidence="1">
    <location>
        <position position="104"/>
    </location>
</feature>
<feature type="binding site" evidence="1">
    <location>
        <position position="232"/>
    </location>
    <ligand>
        <name>Mg(2+)</name>
        <dbReference type="ChEBI" id="CHEBI:18420"/>
        <label>1</label>
    </ligand>
</feature>
<feature type="binding site" evidence="1">
    <location>
        <position position="268"/>
    </location>
    <ligand>
        <name>Mg(2+)</name>
        <dbReference type="ChEBI" id="CHEBI:18420"/>
        <label>1</label>
    </ligand>
</feature>
<feature type="binding site" evidence="1">
    <location>
        <position position="268"/>
    </location>
    <ligand>
        <name>Mg(2+)</name>
        <dbReference type="ChEBI" id="CHEBI:18420"/>
        <label>2</label>
    </ligand>
</feature>
<feature type="binding site" evidence="1">
    <location>
        <position position="271"/>
    </location>
    <ligand>
        <name>Mg(2+)</name>
        <dbReference type="ChEBI" id="CHEBI:18420"/>
        <label>2</label>
    </ligand>
</feature>
<feature type="binding site" evidence="1">
    <location>
        <position position="296"/>
    </location>
    <ligand>
        <name>Mg(2+)</name>
        <dbReference type="ChEBI" id="CHEBI:18420"/>
        <label>1</label>
    </ligand>
</feature>
<feature type="binding site" evidence="1">
    <location>
        <position position="307"/>
    </location>
    <ligand>
        <name>Mg(2+)</name>
        <dbReference type="ChEBI" id="CHEBI:18420"/>
        <label>2</label>
    </ligand>
</feature>
<feature type="binding site" evidence="1">
    <location>
        <position position="309"/>
    </location>
    <ligand>
        <name>Mg(2+)</name>
        <dbReference type="ChEBI" id="CHEBI:18420"/>
        <label>2</label>
    </ligand>
</feature>
<feature type="binding site" evidence="1">
    <location>
        <position position="339"/>
    </location>
    <ligand>
        <name>Mg(2+)</name>
        <dbReference type="ChEBI" id="CHEBI:18420"/>
        <label>1</label>
    </ligand>
</feature>
<proteinExistence type="inferred from homology"/>
<evidence type="ECO:0000255" key="1">
    <source>
        <dbReference type="HAMAP-Rule" id="MF_00455"/>
    </source>
</evidence>
<dbReference type="EC" id="5.3.1.5" evidence="1"/>
<dbReference type="EMBL" id="CU928160">
    <property type="protein sequence ID" value="CAR00527.1"/>
    <property type="molecule type" value="Genomic_DNA"/>
</dbReference>
<dbReference type="RefSeq" id="WP_001149592.1">
    <property type="nucleotide sequence ID" value="NC_011741.1"/>
</dbReference>
<dbReference type="SMR" id="B7M3I8"/>
<dbReference type="GeneID" id="75173765"/>
<dbReference type="KEGG" id="ecr:ECIAI1_3730"/>
<dbReference type="HOGENOM" id="CLU_037261_1_0_6"/>
<dbReference type="GO" id="GO:0005737">
    <property type="term" value="C:cytoplasm"/>
    <property type="evidence" value="ECO:0007669"/>
    <property type="project" value="UniProtKB-SubCell"/>
</dbReference>
<dbReference type="GO" id="GO:0000287">
    <property type="term" value="F:magnesium ion binding"/>
    <property type="evidence" value="ECO:0007669"/>
    <property type="project" value="UniProtKB-UniRule"/>
</dbReference>
<dbReference type="GO" id="GO:0009045">
    <property type="term" value="F:xylose isomerase activity"/>
    <property type="evidence" value="ECO:0007669"/>
    <property type="project" value="UniProtKB-UniRule"/>
</dbReference>
<dbReference type="GO" id="GO:0042732">
    <property type="term" value="P:D-xylose metabolic process"/>
    <property type="evidence" value="ECO:0007669"/>
    <property type="project" value="UniProtKB-UniRule"/>
</dbReference>
<dbReference type="FunFam" id="3.20.20.150:FF:000002">
    <property type="entry name" value="Xylose isomerase"/>
    <property type="match status" value="1"/>
</dbReference>
<dbReference type="Gene3D" id="3.20.20.150">
    <property type="entry name" value="Divalent-metal-dependent TIM barrel enzymes"/>
    <property type="match status" value="1"/>
</dbReference>
<dbReference type="HAMAP" id="MF_00455">
    <property type="entry name" value="Xylose_isom_A"/>
    <property type="match status" value="1"/>
</dbReference>
<dbReference type="InterPro" id="IPR036237">
    <property type="entry name" value="Xyl_isomerase-like_sf"/>
</dbReference>
<dbReference type="InterPro" id="IPR013452">
    <property type="entry name" value="Xylose_isom_bac"/>
</dbReference>
<dbReference type="InterPro" id="IPR001998">
    <property type="entry name" value="Xylose_isomerase"/>
</dbReference>
<dbReference type="NCBIfam" id="NF003998">
    <property type="entry name" value="PRK05474.1"/>
    <property type="match status" value="1"/>
</dbReference>
<dbReference type="NCBIfam" id="TIGR02630">
    <property type="entry name" value="xylose_isom_A"/>
    <property type="match status" value="1"/>
</dbReference>
<dbReference type="PANTHER" id="PTHR48408">
    <property type="match status" value="1"/>
</dbReference>
<dbReference type="PANTHER" id="PTHR48408:SF1">
    <property type="entry name" value="XYLOSE ISOMERASE"/>
    <property type="match status" value="1"/>
</dbReference>
<dbReference type="PRINTS" id="PR00688">
    <property type="entry name" value="XYLOSISMRASE"/>
</dbReference>
<dbReference type="SUPFAM" id="SSF51658">
    <property type="entry name" value="Xylose isomerase-like"/>
    <property type="match status" value="1"/>
</dbReference>
<dbReference type="PROSITE" id="PS51415">
    <property type="entry name" value="XYLOSE_ISOMERASE"/>
    <property type="match status" value="1"/>
</dbReference>
<keyword id="KW-0119">Carbohydrate metabolism</keyword>
<keyword id="KW-0963">Cytoplasm</keyword>
<keyword id="KW-0413">Isomerase</keyword>
<keyword id="KW-0460">Magnesium</keyword>
<keyword id="KW-0479">Metal-binding</keyword>
<keyword id="KW-0859">Xylose metabolism</keyword>
<organism>
    <name type="scientific">Escherichia coli O8 (strain IAI1)</name>
    <dbReference type="NCBI Taxonomy" id="585034"/>
    <lineage>
        <taxon>Bacteria</taxon>
        <taxon>Pseudomonadati</taxon>
        <taxon>Pseudomonadota</taxon>
        <taxon>Gammaproteobacteria</taxon>
        <taxon>Enterobacterales</taxon>
        <taxon>Enterobacteriaceae</taxon>
        <taxon>Escherichia</taxon>
    </lineage>
</organism>
<comment type="catalytic activity">
    <reaction evidence="1">
        <text>alpha-D-xylose = alpha-D-xylulofuranose</text>
        <dbReference type="Rhea" id="RHEA:22816"/>
        <dbReference type="ChEBI" id="CHEBI:28518"/>
        <dbReference type="ChEBI" id="CHEBI:188998"/>
        <dbReference type="EC" id="5.3.1.5"/>
    </reaction>
</comment>
<comment type="cofactor">
    <cofactor evidence="1">
        <name>Mg(2+)</name>
        <dbReference type="ChEBI" id="CHEBI:18420"/>
    </cofactor>
    <text evidence="1">Binds 2 magnesium ions per subunit.</text>
</comment>
<comment type="subunit">
    <text evidence="1">Homotetramer.</text>
</comment>
<comment type="subcellular location">
    <subcellularLocation>
        <location evidence="1">Cytoplasm</location>
    </subcellularLocation>
</comment>
<comment type="similarity">
    <text evidence="1">Belongs to the xylose isomerase family.</text>
</comment>
<reference key="1">
    <citation type="journal article" date="2009" name="PLoS Genet.">
        <title>Organised genome dynamics in the Escherichia coli species results in highly diverse adaptive paths.</title>
        <authorList>
            <person name="Touchon M."/>
            <person name="Hoede C."/>
            <person name="Tenaillon O."/>
            <person name="Barbe V."/>
            <person name="Baeriswyl S."/>
            <person name="Bidet P."/>
            <person name="Bingen E."/>
            <person name="Bonacorsi S."/>
            <person name="Bouchier C."/>
            <person name="Bouvet O."/>
            <person name="Calteau A."/>
            <person name="Chiapello H."/>
            <person name="Clermont O."/>
            <person name="Cruveiller S."/>
            <person name="Danchin A."/>
            <person name="Diard M."/>
            <person name="Dossat C."/>
            <person name="Karoui M.E."/>
            <person name="Frapy E."/>
            <person name="Garry L."/>
            <person name="Ghigo J.M."/>
            <person name="Gilles A.M."/>
            <person name="Johnson J."/>
            <person name="Le Bouguenec C."/>
            <person name="Lescat M."/>
            <person name="Mangenot S."/>
            <person name="Martinez-Jehanne V."/>
            <person name="Matic I."/>
            <person name="Nassif X."/>
            <person name="Oztas S."/>
            <person name="Petit M.A."/>
            <person name="Pichon C."/>
            <person name="Rouy Z."/>
            <person name="Ruf C.S."/>
            <person name="Schneider D."/>
            <person name="Tourret J."/>
            <person name="Vacherie B."/>
            <person name="Vallenet D."/>
            <person name="Medigue C."/>
            <person name="Rocha E.P.C."/>
            <person name="Denamur E."/>
        </authorList>
    </citation>
    <scope>NUCLEOTIDE SEQUENCE [LARGE SCALE GENOMIC DNA]</scope>
    <source>
        <strain>IAI1</strain>
    </source>
</reference>
<protein>
    <recommendedName>
        <fullName evidence="1">Xylose isomerase</fullName>
        <ecNumber evidence="1">5.3.1.5</ecNumber>
    </recommendedName>
</protein>